<evidence type="ECO:0000255" key="1">
    <source>
        <dbReference type="HAMAP-Rule" id="MF_02012"/>
    </source>
</evidence>
<sequence length="109" mass="12523">MSAQPVDIQIFGRSLRVNCPPDQRDALNQAADDLNQRLQDLKVRTRVTNTEQLVFIAALNISYELTQEKAKTRDYAASMEQRIRMLQQTIEQALLDQGRITEKTGQNFE</sequence>
<gene>
    <name evidence="1" type="primary">zapA</name>
    <name type="ordered locus">SPAB_03813</name>
</gene>
<name>ZAPA_SALPB</name>
<protein>
    <recommendedName>
        <fullName evidence="1">Cell division protein ZapA</fullName>
    </recommendedName>
    <alternativeName>
        <fullName evidence="1">Z ring-associated protein ZapA</fullName>
    </alternativeName>
</protein>
<accession>A9N3P2</accession>
<dbReference type="EMBL" id="CP000886">
    <property type="protein sequence ID" value="ABX69145.1"/>
    <property type="molecule type" value="Genomic_DNA"/>
</dbReference>
<dbReference type="RefSeq" id="WP_001276011.1">
    <property type="nucleotide sequence ID" value="NC_010102.1"/>
</dbReference>
<dbReference type="SMR" id="A9N3P2"/>
<dbReference type="GeneID" id="66757358"/>
<dbReference type="KEGG" id="spq:SPAB_03813"/>
<dbReference type="PATRIC" id="fig|1016998.12.peg.3593"/>
<dbReference type="HOGENOM" id="CLU_116623_3_0_6"/>
<dbReference type="BioCyc" id="SENT1016998:SPAB_RS15510-MONOMER"/>
<dbReference type="Proteomes" id="UP000008556">
    <property type="component" value="Chromosome"/>
</dbReference>
<dbReference type="GO" id="GO:0032153">
    <property type="term" value="C:cell division site"/>
    <property type="evidence" value="ECO:0007669"/>
    <property type="project" value="TreeGrafter"/>
</dbReference>
<dbReference type="GO" id="GO:0030428">
    <property type="term" value="C:cell septum"/>
    <property type="evidence" value="ECO:0007669"/>
    <property type="project" value="TreeGrafter"/>
</dbReference>
<dbReference type="GO" id="GO:0005829">
    <property type="term" value="C:cytosol"/>
    <property type="evidence" value="ECO:0007669"/>
    <property type="project" value="TreeGrafter"/>
</dbReference>
<dbReference type="GO" id="GO:0005886">
    <property type="term" value="C:plasma membrane"/>
    <property type="evidence" value="ECO:0007669"/>
    <property type="project" value="UniProtKB-UniRule"/>
</dbReference>
<dbReference type="GO" id="GO:0000917">
    <property type="term" value="P:division septum assembly"/>
    <property type="evidence" value="ECO:0007669"/>
    <property type="project" value="UniProtKB-KW"/>
</dbReference>
<dbReference type="GO" id="GO:0043093">
    <property type="term" value="P:FtsZ-dependent cytokinesis"/>
    <property type="evidence" value="ECO:0007669"/>
    <property type="project" value="TreeGrafter"/>
</dbReference>
<dbReference type="GO" id="GO:0000921">
    <property type="term" value="P:septin ring assembly"/>
    <property type="evidence" value="ECO:0007669"/>
    <property type="project" value="TreeGrafter"/>
</dbReference>
<dbReference type="FunFam" id="1.20.5.50:FF:000001">
    <property type="entry name" value="Cell division protein ZapA"/>
    <property type="match status" value="1"/>
</dbReference>
<dbReference type="FunFam" id="3.30.160.880:FF:000001">
    <property type="entry name" value="Cell division protein ZapA"/>
    <property type="match status" value="1"/>
</dbReference>
<dbReference type="Gene3D" id="1.20.5.50">
    <property type="match status" value="1"/>
</dbReference>
<dbReference type="Gene3D" id="3.30.160.880">
    <property type="entry name" value="Cell division protein ZapA protomer, N-terminal domain"/>
    <property type="match status" value="1"/>
</dbReference>
<dbReference type="HAMAP" id="MF_02012">
    <property type="entry name" value="ZapA_type1"/>
    <property type="match status" value="1"/>
</dbReference>
<dbReference type="InterPro" id="IPR007838">
    <property type="entry name" value="Cell_div_ZapA-like"/>
</dbReference>
<dbReference type="InterPro" id="IPR036192">
    <property type="entry name" value="Cell_div_ZapA-like_sf"/>
</dbReference>
<dbReference type="InterPro" id="IPR023771">
    <property type="entry name" value="Cell_div_ZapA_eubact"/>
</dbReference>
<dbReference type="InterPro" id="IPR042233">
    <property type="entry name" value="Cell_div_ZapA_N"/>
</dbReference>
<dbReference type="NCBIfam" id="NF008209">
    <property type="entry name" value="PRK10972.1"/>
    <property type="match status" value="1"/>
</dbReference>
<dbReference type="PANTHER" id="PTHR34981">
    <property type="entry name" value="CELL DIVISION PROTEIN ZAPA"/>
    <property type="match status" value="1"/>
</dbReference>
<dbReference type="PANTHER" id="PTHR34981:SF1">
    <property type="entry name" value="CELL DIVISION PROTEIN ZAPA"/>
    <property type="match status" value="1"/>
</dbReference>
<dbReference type="Pfam" id="PF05164">
    <property type="entry name" value="ZapA"/>
    <property type="match status" value="1"/>
</dbReference>
<dbReference type="SUPFAM" id="SSF102829">
    <property type="entry name" value="Cell division protein ZapA-like"/>
    <property type="match status" value="1"/>
</dbReference>
<reference key="1">
    <citation type="submission" date="2007-11" db="EMBL/GenBank/DDBJ databases">
        <authorList>
            <consortium name="The Salmonella enterica serovar Paratyphi B Genome Sequencing Project"/>
            <person name="McClelland M."/>
            <person name="Sanderson E.K."/>
            <person name="Porwollik S."/>
            <person name="Spieth J."/>
            <person name="Clifton W.S."/>
            <person name="Fulton R."/>
            <person name="Cordes M."/>
            <person name="Wollam A."/>
            <person name="Shah N."/>
            <person name="Pepin K."/>
            <person name="Bhonagiri V."/>
            <person name="Nash W."/>
            <person name="Johnson M."/>
            <person name="Thiruvilangam P."/>
            <person name="Wilson R."/>
        </authorList>
    </citation>
    <scope>NUCLEOTIDE SEQUENCE [LARGE SCALE GENOMIC DNA]</scope>
    <source>
        <strain>ATCC BAA-1250 / SPB7</strain>
    </source>
</reference>
<proteinExistence type="inferred from homology"/>
<comment type="function">
    <text evidence="1">Activator of cell division through the inhibition of FtsZ GTPase activity, therefore promoting FtsZ assembly into bundles of protofilaments necessary for the formation of the division Z ring. It is recruited early at mid-cell but it is not essential for cell division.</text>
</comment>
<comment type="subunit">
    <text evidence="1">Homodimer. Interacts with FtsZ.</text>
</comment>
<comment type="subcellular location">
    <subcellularLocation>
        <location evidence="1">Cytoplasm</location>
    </subcellularLocation>
    <text evidence="1">Localizes at mid-cell.</text>
</comment>
<comment type="similarity">
    <text evidence="1">Belongs to the ZapA family. Type 1 subfamily.</text>
</comment>
<feature type="chain" id="PRO_0000345656" description="Cell division protein ZapA">
    <location>
        <begin position="1"/>
        <end position="109"/>
    </location>
</feature>
<feature type="coiled-coil region" evidence="1">
    <location>
        <begin position="21"/>
        <end position="97"/>
    </location>
</feature>
<organism>
    <name type="scientific">Salmonella paratyphi B (strain ATCC BAA-1250 / SPB7)</name>
    <dbReference type="NCBI Taxonomy" id="1016998"/>
    <lineage>
        <taxon>Bacteria</taxon>
        <taxon>Pseudomonadati</taxon>
        <taxon>Pseudomonadota</taxon>
        <taxon>Gammaproteobacteria</taxon>
        <taxon>Enterobacterales</taxon>
        <taxon>Enterobacteriaceae</taxon>
        <taxon>Salmonella</taxon>
    </lineage>
</organism>
<keyword id="KW-0131">Cell cycle</keyword>
<keyword id="KW-0132">Cell division</keyword>
<keyword id="KW-0175">Coiled coil</keyword>
<keyword id="KW-0963">Cytoplasm</keyword>
<keyword id="KW-0717">Septation</keyword>